<comment type="function">
    <text evidence="1 5 7 8">Transcriptional regulator that controls a genetic switch in male development (PubMed:16414182, PubMed:16996051). It is necessary and sufficient for initiating male sex determination by directing the development of supporting cell precursors (pre-Sertoli cells) as Sertoli rather than granulosa cells (PubMed:16414182, PubMed:16996051). Involved in different aspects of gene regulation including promoter activation or repression (PubMed:16488877). Binds to the DNA consensus sequence 5'-[AT]AACAA[AT]-3' (By similarity). SRY HMG box recognizes DNA by partial intercalation in the minor groove and promotes DNA bending (By similarity). Also involved in pre-mRNA splicing (By similarity). In male adult brain involved in the maintenance of motor functions of dopaminergic neurons (PubMed:16488877).</text>
</comment>
<comment type="subunit">
    <text evidence="1 6">Interacts with CALM, EP300, HDAC3, KPNB1, ZNF208 isoform KRAB-O, SLC9A3R2 and WT1 (By similarity). The interaction with EP300 modulates its DNA-binding activity (By similarity). The interaction with KPNB1 is sensitive to dissociation by Ran in the GTP-bound form (By similarity). Interacts with PARP1; leading to impair its DNA-binding activity (PubMed:16904257).</text>
</comment>
<comment type="subcellular location">
    <subcellularLocation>
        <location evidence="1">Nucleus speckle</location>
    </subcellularLocation>
    <subcellularLocation>
        <location evidence="5">Cytoplasm</location>
    </subcellularLocation>
    <subcellularLocation>
        <location evidence="5">Nucleus</location>
    </subcellularLocation>
    <text evidence="1 2">Acetylation contributes to its nuclear localization and deacetylation by HDAC3 induces a cytoplasmic delocalization. Colocalizes with SOX6 in speckles. Colocalizes with CAML in the nucleus. Colocalizes in the nucleus with ZNF208 isoform KRAB-O and tyrosine hydroxylase (TH).</text>
</comment>
<comment type="tissue specificity">
    <text evidence="5">Expressed in the substantia nigra (at protein level).</text>
</comment>
<comment type="PTM">
    <text evidence="1">Acetylation of Lys-81 contributes to its nuclear localization and enhances its interaction with KPNB1. Deacetylated by HDAC3.</text>
</comment>
<comment type="similarity">
    <text evidence="9">Belongs to the SRY family.</text>
</comment>
<comment type="online information" name="Protein Spotlight">
    <link uri="https://www.proteinspotlight.org/back_issues/080"/>
    <text>The tenuous nature of sex - Issue 80 of March 2007</text>
</comment>
<sequence>MEGHVKRPMNAFMVWSRGERRKLAQQNPSMQNSEISKHLGYQWKSLTEAEKRPFFQEAQRLKTLHREKYPNYKYQPHRRVKVPQRSYTLQREVASTKLYNLLQWDNNLHTIIYGQDWARAAHQSSKNQKSIYLQPVDIPTGYPLQQKQQHQQQQHVHLQQQQQQQHQFH</sequence>
<protein>
    <recommendedName>
        <fullName>Sex-determining region Y protein</fullName>
    </recommendedName>
    <alternativeName>
        <fullName>Testis-determining factor</fullName>
    </alternativeName>
</protein>
<dbReference type="EMBL" id="AC243442">
    <property type="status" value="NOT_ANNOTATED_CDS"/>
    <property type="molecule type" value="Genomic_DNA"/>
</dbReference>
<dbReference type="EMBL" id="X89730">
    <property type="protein sequence ID" value="CAA61882.1"/>
    <property type="molecule type" value="Genomic_DNA"/>
</dbReference>
<dbReference type="EMBL" id="AJ222688">
    <property type="protein sequence ID" value="CAA10943.1"/>
    <property type="molecule type" value="Genomic_DNA"/>
</dbReference>
<dbReference type="EMBL" id="Z26907">
    <property type="protein sequence ID" value="CAA81533.1"/>
    <property type="molecule type" value="Genomic_DNA"/>
</dbReference>
<dbReference type="PIR" id="S58088">
    <property type="entry name" value="S58088"/>
</dbReference>
<dbReference type="RefSeq" id="NP_036904.1">
    <property type="nucleotide sequence ID" value="NM_012772.1"/>
</dbReference>
<dbReference type="SMR" id="P36394"/>
<dbReference type="STRING" id="10116.ENSRNOP00000076001"/>
<dbReference type="PhosphoSitePlus" id="P36394"/>
<dbReference type="AGR" id="RGD:3759"/>
<dbReference type="RGD" id="3759">
    <property type="gene designation" value="Sry"/>
</dbReference>
<dbReference type="InParanoid" id="P36394"/>
<dbReference type="OrthoDB" id="6247875at2759"/>
<dbReference type="PRO" id="PR:P36394"/>
<dbReference type="Proteomes" id="UP000002494">
    <property type="component" value="Chromosome Y"/>
</dbReference>
<dbReference type="Bgee" id="ENSRNOG00000062090">
    <property type="expression patterns" value="Expressed in lung and 4 other cell types or tissues"/>
</dbReference>
<dbReference type="GO" id="GO:0005737">
    <property type="term" value="C:cytoplasm"/>
    <property type="evidence" value="ECO:0007669"/>
    <property type="project" value="UniProtKB-SubCell"/>
</dbReference>
<dbReference type="GO" id="GO:0016607">
    <property type="term" value="C:nuclear speck"/>
    <property type="evidence" value="ECO:0007669"/>
    <property type="project" value="UniProtKB-SubCell"/>
</dbReference>
<dbReference type="GO" id="GO:0005634">
    <property type="term" value="C:nucleus"/>
    <property type="evidence" value="ECO:0000266"/>
    <property type="project" value="RGD"/>
</dbReference>
<dbReference type="GO" id="GO:0005667">
    <property type="term" value="C:transcription regulator complex"/>
    <property type="evidence" value="ECO:0000266"/>
    <property type="project" value="RGD"/>
</dbReference>
<dbReference type="GO" id="GO:0005516">
    <property type="term" value="F:calmodulin binding"/>
    <property type="evidence" value="ECO:0007669"/>
    <property type="project" value="UniProtKB-KW"/>
</dbReference>
<dbReference type="GO" id="GO:0003677">
    <property type="term" value="F:DNA binding"/>
    <property type="evidence" value="ECO:0000266"/>
    <property type="project" value="RGD"/>
</dbReference>
<dbReference type="GO" id="GO:0008301">
    <property type="term" value="F:DNA binding, bending"/>
    <property type="evidence" value="ECO:0000266"/>
    <property type="project" value="RGD"/>
</dbReference>
<dbReference type="GO" id="GO:0001228">
    <property type="term" value="F:DNA-binding transcription activator activity, RNA polymerase II-specific"/>
    <property type="evidence" value="ECO:0000318"/>
    <property type="project" value="GO_Central"/>
</dbReference>
<dbReference type="GO" id="GO:0000981">
    <property type="term" value="F:DNA-binding transcription factor activity, RNA polymerase II-specific"/>
    <property type="evidence" value="ECO:0000266"/>
    <property type="project" value="RGD"/>
</dbReference>
<dbReference type="GO" id="GO:0140297">
    <property type="term" value="F:DNA-binding transcription factor binding"/>
    <property type="evidence" value="ECO:0000266"/>
    <property type="project" value="RGD"/>
</dbReference>
<dbReference type="GO" id="GO:0019899">
    <property type="term" value="F:enzyme binding"/>
    <property type="evidence" value="ECO:0000353"/>
    <property type="project" value="RGD"/>
</dbReference>
<dbReference type="GO" id="GO:0000978">
    <property type="term" value="F:RNA polymerase II cis-regulatory region sequence-specific DNA binding"/>
    <property type="evidence" value="ECO:0000318"/>
    <property type="project" value="GO_Central"/>
</dbReference>
<dbReference type="GO" id="GO:0043565">
    <property type="term" value="F:sequence-specific DNA binding"/>
    <property type="evidence" value="ECO:0000315"/>
    <property type="project" value="RGD"/>
</dbReference>
<dbReference type="GO" id="GO:0030154">
    <property type="term" value="P:cell differentiation"/>
    <property type="evidence" value="ECO:0000318"/>
    <property type="project" value="GO_Central"/>
</dbReference>
<dbReference type="GO" id="GO:0008584">
    <property type="term" value="P:male gonad development"/>
    <property type="evidence" value="ECO:0000266"/>
    <property type="project" value="RGD"/>
</dbReference>
<dbReference type="GO" id="GO:0030238">
    <property type="term" value="P:male sex determination"/>
    <property type="evidence" value="ECO:0000270"/>
    <property type="project" value="RGD"/>
</dbReference>
<dbReference type="GO" id="GO:0010629">
    <property type="term" value="P:negative regulation of gene expression"/>
    <property type="evidence" value="ECO:0000266"/>
    <property type="project" value="RGD"/>
</dbReference>
<dbReference type="GO" id="GO:0000122">
    <property type="term" value="P:negative regulation of transcription by RNA polymerase II"/>
    <property type="evidence" value="ECO:0000266"/>
    <property type="project" value="RGD"/>
</dbReference>
<dbReference type="GO" id="GO:0045893">
    <property type="term" value="P:positive regulation of DNA-templated transcription"/>
    <property type="evidence" value="ECO:0000266"/>
    <property type="project" value="RGD"/>
</dbReference>
<dbReference type="GO" id="GO:0010628">
    <property type="term" value="P:positive regulation of gene expression"/>
    <property type="evidence" value="ECO:0000266"/>
    <property type="project" value="RGD"/>
</dbReference>
<dbReference type="GO" id="GO:2000020">
    <property type="term" value="P:positive regulation of male gonad development"/>
    <property type="evidence" value="ECO:0000266"/>
    <property type="project" value="RGD"/>
</dbReference>
<dbReference type="GO" id="GO:0045944">
    <property type="term" value="P:positive regulation of transcription by RNA polymerase II"/>
    <property type="evidence" value="ECO:0000314"/>
    <property type="project" value="RGD"/>
</dbReference>
<dbReference type="GO" id="GO:0007530">
    <property type="term" value="P:sex determination"/>
    <property type="evidence" value="ECO:0000266"/>
    <property type="project" value="RGD"/>
</dbReference>
<dbReference type="CDD" id="cd22028">
    <property type="entry name" value="HMG-box_SoxA_SoxB_SoxG"/>
    <property type="match status" value="1"/>
</dbReference>
<dbReference type="FunFam" id="1.10.30.10:FF:000002">
    <property type="entry name" value="transcription factor Sox-2"/>
    <property type="match status" value="1"/>
</dbReference>
<dbReference type="Gene3D" id="1.10.30.10">
    <property type="entry name" value="High mobility group box domain"/>
    <property type="match status" value="1"/>
</dbReference>
<dbReference type="InterPro" id="IPR009071">
    <property type="entry name" value="HMG_box_dom"/>
</dbReference>
<dbReference type="InterPro" id="IPR036910">
    <property type="entry name" value="HMG_box_dom_sf"/>
</dbReference>
<dbReference type="InterPro" id="IPR050140">
    <property type="entry name" value="SRY-related_HMG-box_TF-like"/>
</dbReference>
<dbReference type="PANTHER" id="PTHR10270:SF161">
    <property type="entry name" value="SEX-DETERMINING REGION Y PROTEIN"/>
    <property type="match status" value="1"/>
</dbReference>
<dbReference type="PANTHER" id="PTHR10270">
    <property type="entry name" value="SOX TRANSCRIPTION FACTOR"/>
    <property type="match status" value="1"/>
</dbReference>
<dbReference type="Pfam" id="PF00505">
    <property type="entry name" value="HMG_box"/>
    <property type="match status" value="1"/>
</dbReference>
<dbReference type="SMART" id="SM00398">
    <property type="entry name" value="HMG"/>
    <property type="match status" value="1"/>
</dbReference>
<dbReference type="SUPFAM" id="SSF47095">
    <property type="entry name" value="HMG-box"/>
    <property type="match status" value="1"/>
</dbReference>
<dbReference type="PROSITE" id="PS50118">
    <property type="entry name" value="HMG_BOX_2"/>
    <property type="match status" value="1"/>
</dbReference>
<evidence type="ECO:0000250" key="1">
    <source>
        <dbReference type="UniProtKB" id="Q05066"/>
    </source>
</evidence>
<evidence type="ECO:0000250" key="2">
    <source>
        <dbReference type="UniProtKB" id="Q05738"/>
    </source>
</evidence>
<evidence type="ECO:0000255" key="3">
    <source>
        <dbReference type="PROSITE-ProRule" id="PRU00267"/>
    </source>
</evidence>
<evidence type="ECO:0000256" key="4">
    <source>
        <dbReference type="SAM" id="MobiDB-lite"/>
    </source>
</evidence>
<evidence type="ECO:0000269" key="5">
    <source>
    </source>
</evidence>
<evidence type="ECO:0000269" key="6">
    <source>
    </source>
</evidence>
<evidence type="ECO:0000303" key="7">
    <source>
    </source>
</evidence>
<evidence type="ECO:0000303" key="8">
    <source>
    </source>
</evidence>
<evidence type="ECO:0000305" key="9"/>
<organism>
    <name type="scientific">Rattus norvegicus</name>
    <name type="common">Rat</name>
    <dbReference type="NCBI Taxonomy" id="10116"/>
    <lineage>
        <taxon>Eukaryota</taxon>
        <taxon>Metazoa</taxon>
        <taxon>Chordata</taxon>
        <taxon>Craniata</taxon>
        <taxon>Vertebrata</taxon>
        <taxon>Euteleostomi</taxon>
        <taxon>Mammalia</taxon>
        <taxon>Eutheria</taxon>
        <taxon>Euarchontoglires</taxon>
        <taxon>Glires</taxon>
        <taxon>Rodentia</taxon>
        <taxon>Myomorpha</taxon>
        <taxon>Muroidea</taxon>
        <taxon>Muridae</taxon>
        <taxon>Murinae</taxon>
        <taxon>Rattus</taxon>
    </lineage>
</organism>
<keyword id="KW-0007">Acetylation</keyword>
<keyword id="KW-0010">Activator</keyword>
<keyword id="KW-0112">Calmodulin-binding</keyword>
<keyword id="KW-0963">Cytoplasm</keyword>
<keyword id="KW-0221">Differentiation</keyword>
<keyword id="KW-0238">DNA-binding</keyword>
<keyword id="KW-0539">Nucleus</keyword>
<keyword id="KW-1185">Reference proteome</keyword>
<keyword id="KW-0678">Repressor</keyword>
<keyword id="KW-0726">Sexual differentiation</keyword>
<keyword id="KW-0804">Transcription</keyword>
<keyword id="KW-0805">Transcription regulation</keyword>
<name>SRY_RAT</name>
<feature type="chain" id="PRO_0000048706" description="Sex-determining region Y protein">
    <location>
        <begin position="1"/>
        <end position="169"/>
    </location>
</feature>
<feature type="DNA-binding region" description="HMG box" evidence="3">
    <location>
        <begin position="5"/>
        <end position="73"/>
    </location>
</feature>
<feature type="region of interest" description="Sufficient for interaction with KPNB1" evidence="1">
    <location>
        <begin position="4"/>
        <end position="81"/>
    </location>
</feature>
<feature type="region of interest" description="Required for nuclear localization" evidence="1">
    <location>
        <begin position="6"/>
        <end position="22"/>
    </location>
</feature>
<feature type="region of interest" description="Sufficient for interaction with EP300" evidence="1">
    <location>
        <begin position="52"/>
        <end position="84"/>
    </location>
</feature>
<feature type="region of interest" description="Required for nuclear localization" evidence="1">
    <location>
        <begin position="75"/>
        <end position="81"/>
    </location>
</feature>
<feature type="region of interest" description="Necessary for interaction with ZNF208 isoform KRAB-O" evidence="2">
    <location>
        <begin position="92"/>
        <end position="144"/>
    </location>
</feature>
<feature type="region of interest" description="Necessary for interaction with SLC9A3R2 and nuclear accumulation of SLC9A3R2" evidence="2">
    <location>
        <begin position="94"/>
        <end position="138"/>
    </location>
</feature>
<feature type="region of interest" description="Disordered" evidence="4">
    <location>
        <begin position="144"/>
        <end position="169"/>
    </location>
</feature>
<feature type="compositionally biased region" description="Low complexity" evidence="4">
    <location>
        <begin position="145"/>
        <end position="169"/>
    </location>
</feature>
<feature type="modified residue" description="N6-acetyllysine" evidence="2">
    <location>
        <position position="81"/>
    </location>
</feature>
<feature type="sequence conflict" description="In Ref. 2; CAA61882." evidence="9" ref="2">
    <original>H</original>
    <variation>Q</variation>
    <location>
        <position position="4"/>
    </location>
</feature>
<feature type="sequence conflict" description="In Ref. 2; CAA61882." evidence="9" ref="2">
    <original>R</original>
    <variation>H</variation>
    <location>
        <position position="21"/>
    </location>
</feature>
<feature type="sequence conflict" description="In Ref. 4; CAA81533." evidence="9" ref="4">
    <original>Q</original>
    <variation>R</variation>
    <location>
        <position position="31"/>
    </location>
</feature>
<feature type="sequence conflict" description="In Ref. 2; CAA61882." evidence="9" ref="2">
    <original>H</original>
    <variation>Q</variation>
    <location>
        <position position="38"/>
    </location>
</feature>
<feature type="sequence conflict" description="In Ref. 3; CAA10943." evidence="9" ref="3">
    <original>S</original>
    <variation>M</variation>
    <location>
        <position position="45"/>
    </location>
</feature>
<feature type="sequence conflict" description="In Ref. 4; CAA81533." evidence="9" ref="4">
    <original>F</original>
    <variation>L</variation>
    <location>
        <position position="55"/>
    </location>
</feature>
<accession>P36394</accession>
<accession>O88776</accession>
<accession>Q63558</accession>
<gene>
    <name type="primary">Sry</name>
    <name type="synonym">Tdf</name>
</gene>
<reference key="1">
    <citation type="journal article" date="2004" name="Nature">
        <title>Genome sequence of the Brown Norway rat yields insights into mammalian evolution.</title>
        <authorList>
            <person name="Gibbs R.A."/>
            <person name="Weinstock G.M."/>
            <person name="Metzker M.L."/>
            <person name="Muzny D.M."/>
            <person name="Sodergren E.J."/>
            <person name="Scherer S."/>
            <person name="Scott G."/>
            <person name="Steffen D."/>
            <person name="Worley K.C."/>
            <person name="Burch P.E."/>
            <person name="Okwuonu G."/>
            <person name="Hines S."/>
            <person name="Lewis L."/>
            <person name="Deramo C."/>
            <person name="Delgado O."/>
            <person name="Dugan-Rocha S."/>
            <person name="Miner G."/>
            <person name="Morgan M."/>
            <person name="Hawes A."/>
            <person name="Gill R."/>
            <person name="Holt R.A."/>
            <person name="Adams M.D."/>
            <person name="Amanatides P.G."/>
            <person name="Baden-Tillson H."/>
            <person name="Barnstead M."/>
            <person name="Chin S."/>
            <person name="Evans C.A."/>
            <person name="Ferriera S."/>
            <person name="Fosler C."/>
            <person name="Glodek A."/>
            <person name="Gu Z."/>
            <person name="Jennings D."/>
            <person name="Kraft C.L."/>
            <person name="Nguyen T."/>
            <person name="Pfannkoch C.M."/>
            <person name="Sitter C."/>
            <person name="Sutton G.G."/>
            <person name="Venter J.C."/>
            <person name="Woodage T."/>
            <person name="Smith D."/>
            <person name="Lee H.-M."/>
            <person name="Gustafson E."/>
            <person name="Cahill P."/>
            <person name="Kana A."/>
            <person name="Doucette-Stamm L."/>
            <person name="Weinstock K."/>
            <person name="Fechtel K."/>
            <person name="Weiss R.B."/>
            <person name="Dunn D.M."/>
            <person name="Green E.D."/>
            <person name="Blakesley R.W."/>
            <person name="Bouffard G.G."/>
            <person name="De Jong P.J."/>
            <person name="Osoegawa K."/>
            <person name="Zhu B."/>
            <person name="Marra M."/>
            <person name="Schein J."/>
            <person name="Bosdet I."/>
            <person name="Fjell C."/>
            <person name="Jones S."/>
            <person name="Krzywinski M."/>
            <person name="Mathewson C."/>
            <person name="Siddiqui A."/>
            <person name="Wye N."/>
            <person name="McPherson J."/>
            <person name="Zhao S."/>
            <person name="Fraser C.M."/>
            <person name="Shetty J."/>
            <person name="Shatsman S."/>
            <person name="Geer K."/>
            <person name="Chen Y."/>
            <person name="Abramzon S."/>
            <person name="Nierman W.C."/>
            <person name="Havlak P.H."/>
            <person name="Chen R."/>
            <person name="Durbin K.J."/>
            <person name="Egan A."/>
            <person name="Ren Y."/>
            <person name="Song X.-Z."/>
            <person name="Li B."/>
            <person name="Liu Y."/>
            <person name="Qin X."/>
            <person name="Cawley S."/>
            <person name="Cooney A.J."/>
            <person name="D'Souza L.M."/>
            <person name="Martin K."/>
            <person name="Wu J.Q."/>
            <person name="Gonzalez-Garay M.L."/>
            <person name="Jackson A.R."/>
            <person name="Kalafus K.J."/>
            <person name="McLeod M.P."/>
            <person name="Milosavljevic A."/>
            <person name="Virk D."/>
            <person name="Volkov A."/>
            <person name="Wheeler D.A."/>
            <person name="Zhang Z."/>
            <person name="Bailey J.A."/>
            <person name="Eichler E.E."/>
            <person name="Tuzun E."/>
            <person name="Birney E."/>
            <person name="Mongin E."/>
            <person name="Ureta-Vidal A."/>
            <person name="Woodwark C."/>
            <person name="Zdobnov E."/>
            <person name="Bork P."/>
            <person name="Suyama M."/>
            <person name="Torrents D."/>
            <person name="Alexandersson M."/>
            <person name="Trask B.J."/>
            <person name="Young J.M."/>
            <person name="Huang H."/>
            <person name="Wang H."/>
            <person name="Xing H."/>
            <person name="Daniels S."/>
            <person name="Gietzen D."/>
            <person name="Schmidt J."/>
            <person name="Stevens K."/>
            <person name="Vitt U."/>
            <person name="Wingrove J."/>
            <person name="Camara F."/>
            <person name="Mar Alba M."/>
            <person name="Abril J.F."/>
            <person name="Guigo R."/>
            <person name="Smit A."/>
            <person name="Dubchak I."/>
            <person name="Rubin E.M."/>
            <person name="Couronne O."/>
            <person name="Poliakov A."/>
            <person name="Huebner N."/>
            <person name="Ganten D."/>
            <person name="Goesele C."/>
            <person name="Hummel O."/>
            <person name="Kreitler T."/>
            <person name="Lee Y.-A."/>
            <person name="Monti J."/>
            <person name="Schulz H."/>
            <person name="Zimdahl H."/>
            <person name="Himmelbauer H."/>
            <person name="Lehrach H."/>
            <person name="Jacob H.J."/>
            <person name="Bromberg S."/>
            <person name="Gullings-Handley J."/>
            <person name="Jensen-Seaman M.I."/>
            <person name="Kwitek A.E."/>
            <person name="Lazar J."/>
            <person name="Pasko D."/>
            <person name="Tonellato P.J."/>
            <person name="Twigger S."/>
            <person name="Ponting C.P."/>
            <person name="Duarte J.M."/>
            <person name="Rice S."/>
            <person name="Goodstadt L."/>
            <person name="Beatson S.A."/>
            <person name="Emes R.D."/>
            <person name="Winter E.E."/>
            <person name="Webber C."/>
            <person name="Brandt P."/>
            <person name="Nyakatura G."/>
            <person name="Adetobi M."/>
            <person name="Chiaromonte F."/>
            <person name="Elnitski L."/>
            <person name="Eswara P."/>
            <person name="Hardison R.C."/>
            <person name="Hou M."/>
            <person name="Kolbe D."/>
            <person name="Makova K."/>
            <person name="Miller W."/>
            <person name="Nekrutenko A."/>
            <person name="Riemer C."/>
            <person name="Schwartz S."/>
            <person name="Taylor J."/>
            <person name="Yang S."/>
            <person name="Zhang Y."/>
            <person name="Lindpaintner K."/>
            <person name="Andrews T.D."/>
            <person name="Caccamo M."/>
            <person name="Clamp M."/>
            <person name="Clarke L."/>
            <person name="Curwen V."/>
            <person name="Durbin R.M."/>
            <person name="Eyras E."/>
            <person name="Searle S.M."/>
            <person name="Cooper G.M."/>
            <person name="Batzoglou S."/>
            <person name="Brudno M."/>
            <person name="Sidow A."/>
            <person name="Stone E.A."/>
            <person name="Payseur B.A."/>
            <person name="Bourque G."/>
            <person name="Lopez-Otin C."/>
            <person name="Puente X.S."/>
            <person name="Chakrabarti K."/>
            <person name="Chatterji S."/>
            <person name="Dewey C."/>
            <person name="Pachter L."/>
            <person name="Bray N."/>
            <person name="Yap V.B."/>
            <person name="Caspi A."/>
            <person name="Tesler G."/>
            <person name="Pevzner P.A."/>
            <person name="Haussler D."/>
            <person name="Roskin K.M."/>
            <person name="Baertsch R."/>
            <person name="Clawson H."/>
            <person name="Furey T.S."/>
            <person name="Hinrichs A.S."/>
            <person name="Karolchik D."/>
            <person name="Kent W.J."/>
            <person name="Rosenbloom K.R."/>
            <person name="Trumbower H."/>
            <person name="Weirauch M."/>
            <person name="Cooper D.N."/>
            <person name="Stenson P.D."/>
            <person name="Ma B."/>
            <person name="Brent M."/>
            <person name="Arumugam M."/>
            <person name="Shteynberg D."/>
            <person name="Copley R.R."/>
            <person name="Taylor M.S."/>
            <person name="Riethman H."/>
            <person name="Mudunuri U."/>
            <person name="Peterson J."/>
            <person name="Guyer M."/>
            <person name="Felsenfeld A."/>
            <person name="Old S."/>
            <person name="Mockrin S."/>
            <person name="Collins F.S."/>
        </authorList>
    </citation>
    <scope>NUCLEOTIDE SEQUENCE [LARGE SCALE GENOMIC DNA]</scope>
    <source>
        <strain>Brown Norway</strain>
    </source>
</reference>
<reference key="2">
    <citation type="journal article" date="1997" name="J. Androl.">
        <title>Use of a rat cDNA probe specific for the Y chromosome to detect male-derived cells.</title>
        <authorList>
            <person name="An J."/>
            <person name="Beauchemin N."/>
            <person name="Albanese J."/>
            <person name="Abney T.O."/>
            <person name="Sullivan A.K."/>
        </authorList>
    </citation>
    <scope>NUCLEOTIDE SEQUENCE [GENOMIC DNA] OF 1-121</scope>
    <source>
        <strain>Brown Norway</strain>
        <tissue>Bone marrow</tissue>
        <tissue>Thymus</tissue>
    </source>
</reference>
<reference key="3">
    <citation type="journal article" date="1998" name="Biochem. Biophys. Res. Commun.">
        <title>Identification of conserved potentially regulatory sequences of the SRY gene from 10 different species of mammals.</title>
        <authorList>
            <person name="Margarit E."/>
            <person name="Guillen A."/>
            <person name="Rebordosa C."/>
            <person name="Vidal-Taboada J.M."/>
            <person name="Sanchez M."/>
            <person name="Ballesta F."/>
            <person name="Oliva R."/>
        </authorList>
    </citation>
    <scope>NUCLEOTIDE SEQUENCE [GENOMIC DNA] OF 1-49</scope>
</reference>
<reference key="4">
    <citation type="journal article" date="1993" name="Mol. Ecol.">
        <title>Primers for the differential amplification of the sex-determining region Y gene in a range of mammal species.</title>
        <authorList>
            <person name="Griffiths R."/>
            <person name="Tiwari B."/>
        </authorList>
    </citation>
    <scope>NUCLEOTIDE SEQUENCE [GENOMIC DNA] OF 13-67</scope>
</reference>
<reference key="5">
    <citation type="journal article" date="2006" name="Curr. Biol.">
        <title>Direct regulation of adult brain function by the male-specific factor SRY.</title>
        <authorList>
            <person name="Dewing P."/>
            <person name="Chiang C.W."/>
            <person name="Sinchak K."/>
            <person name="Sim H."/>
            <person name="Fernagut P.-O."/>
            <person name="Kelly S."/>
            <person name="Chesselet M.-F."/>
            <person name="Micevych P.E."/>
            <person name="Albrecht K.H."/>
            <person name="Harley V.R."/>
            <person name="Vilain E."/>
        </authorList>
    </citation>
    <scope>FUNCTION</scope>
    <scope>SUBCELLULAR LOCATION</scope>
    <scope>TISSUE SPECIFICITY</scope>
</reference>
<reference key="6">
    <citation type="journal article" date="2006" name="Mol. Cell. Endocrinol.">
        <title>The poly(ADP-ribose) polymerase 1 interacts with Sry and modulates its biological functions.</title>
        <authorList>
            <person name="Li Y."/>
            <person name="Oh H.J."/>
            <person name="Lau Y.-F.C."/>
        </authorList>
    </citation>
    <scope>INTERACTION WITH PARP1</scope>
</reference>
<reference key="7">
    <citation type="journal article" date="2007" name="Dev. Biol.">
        <title>Sry and the hesitant beginnings of male development.</title>
        <authorList>
            <person name="Polanco J.C."/>
            <person name="Koopman P."/>
        </authorList>
    </citation>
    <scope>REVIEW</scope>
</reference>
<reference key="8">
    <citation type="journal article" date="2006" name="Mol. Cell. Endocrinol.">
        <title>KRAB: a partner for SRY action on chromatin.</title>
        <authorList>
            <person name="Oh H.J."/>
            <person name="Lau Y.F."/>
        </authorList>
    </citation>
    <scope>REVIEW</scope>
</reference>
<proteinExistence type="evidence at protein level"/>